<evidence type="ECO:0000255" key="1">
    <source>
        <dbReference type="HAMAP-Rule" id="MF_00023"/>
    </source>
</evidence>
<protein>
    <recommendedName>
        <fullName evidence="1">SsrA-binding protein</fullName>
    </recommendedName>
    <alternativeName>
        <fullName evidence="1">Small protein B</fullName>
    </alternativeName>
</protein>
<reference key="1">
    <citation type="journal article" date="2004" name="Proc. Natl. Acad. Sci. U.S.A.">
        <title>Comparison of the genome of the oral pathogen Treponema denticola with other spirochete genomes.</title>
        <authorList>
            <person name="Seshadri R."/>
            <person name="Myers G.S.A."/>
            <person name="Tettelin H."/>
            <person name="Eisen J.A."/>
            <person name="Heidelberg J.F."/>
            <person name="Dodson R.J."/>
            <person name="Davidsen T.M."/>
            <person name="DeBoy R.T."/>
            <person name="Fouts D.E."/>
            <person name="Haft D.H."/>
            <person name="Selengut J."/>
            <person name="Ren Q."/>
            <person name="Brinkac L.M."/>
            <person name="Madupu R."/>
            <person name="Kolonay J.F."/>
            <person name="Durkin S.A."/>
            <person name="Daugherty S.C."/>
            <person name="Shetty J."/>
            <person name="Shvartsbeyn A."/>
            <person name="Gebregeorgis E."/>
            <person name="Geer K."/>
            <person name="Tsegaye G."/>
            <person name="Malek J.A."/>
            <person name="Ayodeji B."/>
            <person name="Shatsman S."/>
            <person name="McLeod M.P."/>
            <person name="Smajs D."/>
            <person name="Howell J.K."/>
            <person name="Pal S."/>
            <person name="Amin A."/>
            <person name="Vashisth P."/>
            <person name="McNeill T.Z."/>
            <person name="Xiang Q."/>
            <person name="Sodergren E."/>
            <person name="Baca E."/>
            <person name="Weinstock G.M."/>
            <person name="Norris S.J."/>
            <person name="Fraser C.M."/>
            <person name="Paulsen I.T."/>
        </authorList>
    </citation>
    <scope>NUCLEOTIDE SEQUENCE [LARGE SCALE GENOMIC DNA]</scope>
    <source>
        <strain>ATCC 35405 / DSM 14222 / CIP 103919 / JCM 8153 / KCTC 15104</strain>
    </source>
</reference>
<keyword id="KW-0963">Cytoplasm</keyword>
<keyword id="KW-1185">Reference proteome</keyword>
<keyword id="KW-0694">RNA-binding</keyword>
<name>SSRP_TREDE</name>
<sequence length="154" mass="18167">MEKTPVKIIAKNKKAFFNYTVEEKIECGLVLKGTEVKSLREGRISFPDAFAEIKDNEVWVKNFHISEYIYSSVFNHDPERPKKLLLKKDEIKRLKRKVEEKGYTLVPLEFYFKNGIVKVLLGVCKGKKTFDKRADIKDRDIKRDMQREIKIRGK</sequence>
<dbReference type="EMBL" id="AE017226">
    <property type="protein sequence ID" value="AAS11981.1"/>
    <property type="molecule type" value="Genomic_DNA"/>
</dbReference>
<dbReference type="RefSeq" id="NP_972070.1">
    <property type="nucleotide sequence ID" value="NC_002967.9"/>
</dbReference>
<dbReference type="RefSeq" id="WP_002668932.1">
    <property type="nucleotide sequence ID" value="NC_002967.9"/>
</dbReference>
<dbReference type="SMR" id="Q73MP4"/>
<dbReference type="STRING" id="243275.TDE_1464"/>
<dbReference type="PaxDb" id="243275-TDE_1464"/>
<dbReference type="GeneID" id="2741579"/>
<dbReference type="KEGG" id="tde:TDE_1464"/>
<dbReference type="PATRIC" id="fig|243275.7.peg.1405"/>
<dbReference type="eggNOG" id="COG0691">
    <property type="taxonomic scope" value="Bacteria"/>
</dbReference>
<dbReference type="HOGENOM" id="CLU_108953_0_0_12"/>
<dbReference type="OrthoDB" id="9805462at2"/>
<dbReference type="Proteomes" id="UP000008212">
    <property type="component" value="Chromosome"/>
</dbReference>
<dbReference type="GO" id="GO:0005829">
    <property type="term" value="C:cytosol"/>
    <property type="evidence" value="ECO:0007669"/>
    <property type="project" value="TreeGrafter"/>
</dbReference>
<dbReference type="GO" id="GO:0003723">
    <property type="term" value="F:RNA binding"/>
    <property type="evidence" value="ECO:0007669"/>
    <property type="project" value="UniProtKB-UniRule"/>
</dbReference>
<dbReference type="GO" id="GO:0070929">
    <property type="term" value="P:trans-translation"/>
    <property type="evidence" value="ECO:0007669"/>
    <property type="project" value="UniProtKB-UniRule"/>
</dbReference>
<dbReference type="CDD" id="cd09294">
    <property type="entry name" value="SmpB"/>
    <property type="match status" value="1"/>
</dbReference>
<dbReference type="Gene3D" id="2.40.280.10">
    <property type="match status" value="1"/>
</dbReference>
<dbReference type="HAMAP" id="MF_00023">
    <property type="entry name" value="SmpB"/>
    <property type="match status" value="1"/>
</dbReference>
<dbReference type="InterPro" id="IPR023620">
    <property type="entry name" value="SmpB"/>
</dbReference>
<dbReference type="InterPro" id="IPR000037">
    <property type="entry name" value="SsrA-bd_prot"/>
</dbReference>
<dbReference type="InterPro" id="IPR020081">
    <property type="entry name" value="SsrA-bd_prot_CS"/>
</dbReference>
<dbReference type="NCBIfam" id="NF003843">
    <property type="entry name" value="PRK05422.1"/>
    <property type="match status" value="1"/>
</dbReference>
<dbReference type="NCBIfam" id="TIGR00086">
    <property type="entry name" value="smpB"/>
    <property type="match status" value="1"/>
</dbReference>
<dbReference type="PANTHER" id="PTHR30308:SF2">
    <property type="entry name" value="SSRA-BINDING PROTEIN"/>
    <property type="match status" value="1"/>
</dbReference>
<dbReference type="PANTHER" id="PTHR30308">
    <property type="entry name" value="TMRNA-BINDING COMPONENT OF TRANS-TRANSLATION TAGGING COMPLEX"/>
    <property type="match status" value="1"/>
</dbReference>
<dbReference type="Pfam" id="PF01668">
    <property type="entry name" value="SmpB"/>
    <property type="match status" value="1"/>
</dbReference>
<dbReference type="SUPFAM" id="SSF74982">
    <property type="entry name" value="Small protein B (SmpB)"/>
    <property type="match status" value="1"/>
</dbReference>
<dbReference type="PROSITE" id="PS01317">
    <property type="entry name" value="SSRP"/>
    <property type="match status" value="1"/>
</dbReference>
<gene>
    <name evidence="1" type="primary">smpB</name>
    <name type="ordered locus">TDE_1464</name>
</gene>
<accession>Q73MP4</accession>
<feature type="chain" id="PRO_0000103058" description="SsrA-binding protein">
    <location>
        <begin position="1"/>
        <end position="154"/>
    </location>
</feature>
<proteinExistence type="inferred from homology"/>
<organism>
    <name type="scientific">Treponema denticola (strain ATCC 35405 / DSM 14222 / CIP 103919 / JCM 8153 / KCTC 15104)</name>
    <dbReference type="NCBI Taxonomy" id="243275"/>
    <lineage>
        <taxon>Bacteria</taxon>
        <taxon>Pseudomonadati</taxon>
        <taxon>Spirochaetota</taxon>
        <taxon>Spirochaetia</taxon>
        <taxon>Spirochaetales</taxon>
        <taxon>Treponemataceae</taxon>
        <taxon>Treponema</taxon>
    </lineage>
</organism>
<comment type="function">
    <text evidence="1">Required for rescue of stalled ribosomes mediated by trans-translation. Binds to transfer-messenger RNA (tmRNA), required for stable association of tmRNA with ribosomes. tmRNA and SmpB together mimic tRNA shape, replacing the anticodon stem-loop with SmpB. tmRNA is encoded by the ssrA gene; the 2 termini fold to resemble tRNA(Ala) and it encodes a 'tag peptide', a short internal open reading frame. During trans-translation Ala-aminoacylated tmRNA acts like a tRNA, entering the A-site of stalled ribosomes, displacing the stalled mRNA. The ribosome then switches to translate the ORF on the tmRNA; the nascent peptide is terminated with the 'tag peptide' encoded by the tmRNA and targeted for degradation. The ribosome is freed to recommence translation, which seems to be the essential function of trans-translation.</text>
</comment>
<comment type="subcellular location">
    <subcellularLocation>
        <location evidence="1">Cytoplasm</location>
    </subcellularLocation>
    <text evidence="1">The tmRNA-SmpB complex associates with stalled 70S ribosomes.</text>
</comment>
<comment type="similarity">
    <text evidence="1">Belongs to the SmpB family.</text>
</comment>